<evidence type="ECO:0000255" key="1">
    <source>
        <dbReference type="HAMAP-Rule" id="MF_00503"/>
    </source>
</evidence>
<evidence type="ECO:0000305" key="2"/>
<keyword id="KW-0687">Ribonucleoprotein</keyword>
<keyword id="KW-0689">Ribosomal protein</keyword>
<keyword id="KW-0694">RNA-binding</keyword>
<keyword id="KW-0699">rRNA-binding</keyword>
<sequence length="149" mass="16517">MEVILLEKVRNLGNLGDKVHVKSGYGRNYLIPQNKAVFATEQNIELFQKRRAELEKKAQQALANAEQRAAKLNDTTIVISAMASDEGKLYGSVGVNEIKDALIEKQIEISKREIVMPEGPLHSIGNYVVEVHVHSDVVANLQVEIISAK</sequence>
<protein>
    <recommendedName>
        <fullName evidence="1">Large ribosomal subunit protein bL9</fullName>
    </recommendedName>
    <alternativeName>
        <fullName evidence="2">50S ribosomal protein L9</fullName>
    </alternativeName>
</protein>
<accession>Q5X4X3</accession>
<organism>
    <name type="scientific">Legionella pneumophila (strain Paris)</name>
    <dbReference type="NCBI Taxonomy" id="297246"/>
    <lineage>
        <taxon>Bacteria</taxon>
        <taxon>Pseudomonadati</taxon>
        <taxon>Pseudomonadota</taxon>
        <taxon>Gammaproteobacteria</taxon>
        <taxon>Legionellales</taxon>
        <taxon>Legionellaceae</taxon>
        <taxon>Legionella</taxon>
    </lineage>
</organism>
<dbReference type="EMBL" id="CR628336">
    <property type="protein sequence ID" value="CAH12698.1"/>
    <property type="molecule type" value="Genomic_DNA"/>
</dbReference>
<dbReference type="RefSeq" id="WP_011213866.1">
    <property type="nucleotide sequence ID" value="NC_006368.1"/>
</dbReference>
<dbReference type="SMR" id="Q5X4X3"/>
<dbReference type="KEGG" id="lpp:lpp1547"/>
<dbReference type="LegioList" id="lpp1547"/>
<dbReference type="HOGENOM" id="CLU_078938_4_1_6"/>
<dbReference type="GO" id="GO:1990904">
    <property type="term" value="C:ribonucleoprotein complex"/>
    <property type="evidence" value="ECO:0007669"/>
    <property type="project" value="UniProtKB-KW"/>
</dbReference>
<dbReference type="GO" id="GO:0005840">
    <property type="term" value="C:ribosome"/>
    <property type="evidence" value="ECO:0007669"/>
    <property type="project" value="UniProtKB-KW"/>
</dbReference>
<dbReference type="GO" id="GO:0019843">
    <property type="term" value="F:rRNA binding"/>
    <property type="evidence" value="ECO:0007669"/>
    <property type="project" value="UniProtKB-UniRule"/>
</dbReference>
<dbReference type="GO" id="GO:0003735">
    <property type="term" value="F:structural constituent of ribosome"/>
    <property type="evidence" value="ECO:0007669"/>
    <property type="project" value="InterPro"/>
</dbReference>
<dbReference type="GO" id="GO:0006412">
    <property type="term" value="P:translation"/>
    <property type="evidence" value="ECO:0007669"/>
    <property type="project" value="UniProtKB-UniRule"/>
</dbReference>
<dbReference type="Gene3D" id="3.10.430.100">
    <property type="entry name" value="Ribosomal protein L9, C-terminal domain"/>
    <property type="match status" value="1"/>
</dbReference>
<dbReference type="Gene3D" id="3.40.5.10">
    <property type="entry name" value="Ribosomal protein L9, N-terminal domain"/>
    <property type="match status" value="1"/>
</dbReference>
<dbReference type="HAMAP" id="MF_00503">
    <property type="entry name" value="Ribosomal_bL9"/>
    <property type="match status" value="1"/>
</dbReference>
<dbReference type="InterPro" id="IPR000244">
    <property type="entry name" value="Ribosomal_bL9"/>
</dbReference>
<dbReference type="InterPro" id="IPR009027">
    <property type="entry name" value="Ribosomal_bL9/RNase_H1_N"/>
</dbReference>
<dbReference type="InterPro" id="IPR020594">
    <property type="entry name" value="Ribosomal_bL9_bac/chp"/>
</dbReference>
<dbReference type="InterPro" id="IPR020069">
    <property type="entry name" value="Ribosomal_bL9_C"/>
</dbReference>
<dbReference type="InterPro" id="IPR036791">
    <property type="entry name" value="Ribosomal_bL9_C_sf"/>
</dbReference>
<dbReference type="InterPro" id="IPR020070">
    <property type="entry name" value="Ribosomal_bL9_N"/>
</dbReference>
<dbReference type="InterPro" id="IPR036935">
    <property type="entry name" value="Ribosomal_bL9_N_sf"/>
</dbReference>
<dbReference type="NCBIfam" id="TIGR00158">
    <property type="entry name" value="L9"/>
    <property type="match status" value="1"/>
</dbReference>
<dbReference type="PANTHER" id="PTHR21368">
    <property type="entry name" value="50S RIBOSOMAL PROTEIN L9"/>
    <property type="match status" value="1"/>
</dbReference>
<dbReference type="Pfam" id="PF03948">
    <property type="entry name" value="Ribosomal_L9_C"/>
    <property type="match status" value="1"/>
</dbReference>
<dbReference type="Pfam" id="PF01281">
    <property type="entry name" value="Ribosomal_L9_N"/>
    <property type="match status" value="1"/>
</dbReference>
<dbReference type="SUPFAM" id="SSF55658">
    <property type="entry name" value="L9 N-domain-like"/>
    <property type="match status" value="1"/>
</dbReference>
<dbReference type="SUPFAM" id="SSF55653">
    <property type="entry name" value="Ribosomal protein L9 C-domain"/>
    <property type="match status" value="1"/>
</dbReference>
<dbReference type="PROSITE" id="PS00651">
    <property type="entry name" value="RIBOSOMAL_L9"/>
    <property type="match status" value="1"/>
</dbReference>
<proteinExistence type="inferred from homology"/>
<reference key="1">
    <citation type="journal article" date="2004" name="Nat. Genet.">
        <title>Evidence in the Legionella pneumophila genome for exploitation of host cell functions and high genome plasticity.</title>
        <authorList>
            <person name="Cazalet C."/>
            <person name="Rusniok C."/>
            <person name="Brueggemann H."/>
            <person name="Zidane N."/>
            <person name="Magnier A."/>
            <person name="Ma L."/>
            <person name="Tichit M."/>
            <person name="Jarraud S."/>
            <person name="Bouchier C."/>
            <person name="Vandenesch F."/>
            <person name="Kunst F."/>
            <person name="Etienne J."/>
            <person name="Glaser P."/>
            <person name="Buchrieser C."/>
        </authorList>
    </citation>
    <scope>NUCLEOTIDE SEQUENCE [LARGE SCALE GENOMIC DNA]</scope>
    <source>
        <strain>Paris</strain>
    </source>
</reference>
<feature type="chain" id="PRO_0000236538" description="Large ribosomal subunit protein bL9">
    <location>
        <begin position="1"/>
        <end position="149"/>
    </location>
</feature>
<name>RL9_LEGPA</name>
<gene>
    <name evidence="1" type="primary">rplI</name>
    <name type="ordered locus">lpp1547</name>
</gene>
<comment type="function">
    <text evidence="1">Binds to the 23S rRNA.</text>
</comment>
<comment type="similarity">
    <text evidence="1">Belongs to the bacterial ribosomal protein bL9 family.</text>
</comment>